<keyword id="KW-0066">ATP synthesis</keyword>
<keyword id="KW-0138">CF(0)</keyword>
<keyword id="KW-0375">Hydrogen ion transport</keyword>
<keyword id="KW-0406">Ion transport</keyword>
<keyword id="KW-0472">Membrane</keyword>
<keyword id="KW-1185">Reference proteome</keyword>
<keyword id="KW-0793">Thylakoid</keyword>
<keyword id="KW-0812">Transmembrane</keyword>
<keyword id="KW-1133">Transmembrane helix</keyword>
<keyword id="KW-0813">Transport</keyword>
<protein>
    <recommendedName>
        <fullName evidence="1">ATP synthase subunit b'</fullName>
    </recommendedName>
    <alternativeName>
        <fullName evidence="1">ATP synthase F(0) sector subunit b'</fullName>
    </alternativeName>
    <alternativeName>
        <fullName evidence="1">ATPase subunit II</fullName>
    </alternativeName>
    <alternativeName>
        <fullName evidence="1">F-type ATPase subunit b'</fullName>
        <shortName evidence="1">F-ATPase subunit b'</shortName>
    </alternativeName>
</protein>
<gene>
    <name evidence="1 2" type="primary">atpF2</name>
    <name evidence="1" type="synonym">atpG</name>
    <name type="ordered locus">SYNPCC7002_A0737</name>
</gene>
<reference key="1">
    <citation type="submission" date="2008-02" db="EMBL/GenBank/DDBJ databases">
        <title>Complete sequence of Synechococcus sp. PCC 7002.</title>
        <authorList>
            <person name="Li T."/>
            <person name="Zhao J."/>
            <person name="Zhao C."/>
            <person name="Liu Z."/>
            <person name="Zhao F."/>
            <person name="Marquardt J."/>
            <person name="Nomura C.T."/>
            <person name="Persson S."/>
            <person name="Detter J.C."/>
            <person name="Richardson P.M."/>
            <person name="Lanz C."/>
            <person name="Schuster S.C."/>
            <person name="Wang J."/>
            <person name="Li S."/>
            <person name="Huang X."/>
            <person name="Cai T."/>
            <person name="Yu Z."/>
            <person name="Luo J."/>
            <person name="Zhao J."/>
            <person name="Bryant D.A."/>
        </authorList>
    </citation>
    <scope>NUCLEOTIDE SEQUENCE [LARGE SCALE GENOMIC DNA]</scope>
    <source>
        <strain>ATCC 27264 / PCC 7002 / PR-6</strain>
    </source>
</reference>
<accession>B1XHZ1</accession>
<comment type="function">
    <text evidence="1">F(1)F(0) ATP synthase produces ATP from ADP in the presence of a proton or sodium gradient. F-type ATPases consist of two structural domains, F(1) containing the extramembraneous catalytic core and F(0) containing the membrane proton channel, linked together by a central stalk and a peripheral stalk. During catalysis, ATP synthesis in the catalytic domain of F(1) is coupled via a rotary mechanism of the central stalk subunits to proton translocation.</text>
</comment>
<comment type="function">
    <text evidence="1">Component of the F(0) channel, it forms part of the peripheral stalk, linking F(1) to F(0). The b'-subunit is a diverged and duplicated form of b found in plants and photosynthetic bacteria.</text>
</comment>
<comment type="subunit">
    <text evidence="1">F-type ATPases have 2 components, F(1) - the catalytic core - and F(0) - the membrane proton channel. F(1) has five subunits: alpha(3), beta(3), gamma(1), delta(1), epsilon(1). F(0) has four main subunits: a(1), b(1), b'(1) and c(10-14). The alpha and beta chains form an alternating ring which encloses part of the gamma chain. F(1) is attached to F(0) by a central stalk formed by the gamma and epsilon chains, while a peripheral stalk is formed by the delta, b and b' chains.</text>
</comment>
<comment type="subcellular location">
    <subcellularLocation>
        <location evidence="1">Cellular thylakoid membrane</location>
        <topology evidence="1">Single-pass membrane protein</topology>
    </subcellularLocation>
</comment>
<comment type="similarity">
    <text evidence="1">Belongs to the ATPase B chain family.</text>
</comment>
<sequence length="161" mass="17818">MTHWTIVLATEAVEKTAEGGLFDFDATLPVMAIQFLVLAALLNKLFYKPIGQAIDDRSDYIRTNLVDAKERQQKAEDLAAQYEQELRDVRREAQDVIAKAQAEAQKVVADEVKSAQAEALAEREKAALEIEAQRESAFKSLEQQVDSLSQAIASKLVGAKL</sequence>
<dbReference type="EMBL" id="CP000951">
    <property type="protein sequence ID" value="ACA98742.1"/>
    <property type="molecule type" value="Genomic_DNA"/>
</dbReference>
<dbReference type="RefSeq" id="WP_012306366.1">
    <property type="nucleotide sequence ID" value="NZ_JAHHPU010000001.1"/>
</dbReference>
<dbReference type="SMR" id="B1XHZ1"/>
<dbReference type="STRING" id="32049.SYNPCC7002_A0737"/>
<dbReference type="KEGG" id="syp:SYNPCC7002_A0737"/>
<dbReference type="eggNOG" id="COG0711">
    <property type="taxonomic scope" value="Bacteria"/>
</dbReference>
<dbReference type="HOGENOM" id="CLU_079215_9_0_3"/>
<dbReference type="Proteomes" id="UP000001688">
    <property type="component" value="Chromosome"/>
</dbReference>
<dbReference type="GO" id="GO:0031676">
    <property type="term" value="C:plasma membrane-derived thylakoid membrane"/>
    <property type="evidence" value="ECO:0007669"/>
    <property type="project" value="UniProtKB-SubCell"/>
</dbReference>
<dbReference type="GO" id="GO:0045259">
    <property type="term" value="C:proton-transporting ATP synthase complex"/>
    <property type="evidence" value="ECO:0007669"/>
    <property type="project" value="UniProtKB-KW"/>
</dbReference>
<dbReference type="GO" id="GO:0046933">
    <property type="term" value="F:proton-transporting ATP synthase activity, rotational mechanism"/>
    <property type="evidence" value="ECO:0007669"/>
    <property type="project" value="UniProtKB-UniRule"/>
</dbReference>
<dbReference type="GO" id="GO:0046961">
    <property type="term" value="F:proton-transporting ATPase activity, rotational mechanism"/>
    <property type="evidence" value="ECO:0007669"/>
    <property type="project" value="TreeGrafter"/>
</dbReference>
<dbReference type="CDD" id="cd06503">
    <property type="entry name" value="ATP-synt_Fo_b"/>
    <property type="match status" value="1"/>
</dbReference>
<dbReference type="HAMAP" id="MF_01398">
    <property type="entry name" value="ATP_synth_b_bprime"/>
    <property type="match status" value="1"/>
</dbReference>
<dbReference type="HAMAP" id="MF_01399">
    <property type="entry name" value="ATP_synth_bprime"/>
    <property type="match status" value="1"/>
</dbReference>
<dbReference type="InterPro" id="IPR034679">
    <property type="entry name" value="ATP_synth_b"/>
</dbReference>
<dbReference type="InterPro" id="IPR002146">
    <property type="entry name" value="ATP_synth_b/b'su_bac/chlpt"/>
</dbReference>
<dbReference type="InterPro" id="IPR005864">
    <property type="entry name" value="ATP_synth_F0_bsu_bac"/>
</dbReference>
<dbReference type="InterPro" id="IPR050059">
    <property type="entry name" value="ATP_synthase_B_chain"/>
</dbReference>
<dbReference type="NCBIfam" id="TIGR01144">
    <property type="entry name" value="ATP_synt_b"/>
    <property type="match status" value="1"/>
</dbReference>
<dbReference type="NCBIfam" id="NF005607">
    <property type="entry name" value="PRK07353.1"/>
    <property type="match status" value="1"/>
</dbReference>
<dbReference type="PANTHER" id="PTHR33445">
    <property type="entry name" value="ATP SYNTHASE SUBUNIT B', CHLOROPLASTIC"/>
    <property type="match status" value="1"/>
</dbReference>
<dbReference type="PANTHER" id="PTHR33445:SF2">
    <property type="entry name" value="ATP SYNTHASE SUBUNIT B', CHLOROPLASTIC"/>
    <property type="match status" value="1"/>
</dbReference>
<dbReference type="Pfam" id="PF00430">
    <property type="entry name" value="ATP-synt_B"/>
    <property type="match status" value="1"/>
</dbReference>
<proteinExistence type="inferred from homology"/>
<evidence type="ECO:0000255" key="1">
    <source>
        <dbReference type="HAMAP-Rule" id="MF_01399"/>
    </source>
</evidence>
<evidence type="ECO:0000305" key="2"/>
<feature type="chain" id="PRO_0000369051" description="ATP synthase subunit b'">
    <location>
        <begin position="1"/>
        <end position="161"/>
    </location>
</feature>
<feature type="transmembrane region" description="Helical" evidence="1">
    <location>
        <begin position="30"/>
        <end position="47"/>
    </location>
</feature>
<organism>
    <name type="scientific">Picosynechococcus sp. (strain ATCC 27264 / PCC 7002 / PR-6)</name>
    <name type="common">Agmenellum quadruplicatum</name>
    <dbReference type="NCBI Taxonomy" id="32049"/>
    <lineage>
        <taxon>Bacteria</taxon>
        <taxon>Bacillati</taxon>
        <taxon>Cyanobacteriota</taxon>
        <taxon>Cyanophyceae</taxon>
        <taxon>Oscillatoriophycideae</taxon>
        <taxon>Chroococcales</taxon>
        <taxon>Geminocystaceae</taxon>
        <taxon>Picosynechococcus</taxon>
    </lineage>
</organism>
<name>ATPF2_PICP2</name>